<name>MURB_SALCH</name>
<reference key="1">
    <citation type="journal article" date="2005" name="Nucleic Acids Res.">
        <title>The genome sequence of Salmonella enterica serovar Choleraesuis, a highly invasive and resistant zoonotic pathogen.</title>
        <authorList>
            <person name="Chiu C.-H."/>
            <person name="Tang P."/>
            <person name="Chu C."/>
            <person name="Hu S."/>
            <person name="Bao Q."/>
            <person name="Yu J."/>
            <person name="Chou Y.-Y."/>
            <person name="Wang H.-S."/>
            <person name="Lee Y.-S."/>
        </authorList>
    </citation>
    <scope>NUCLEOTIDE SEQUENCE [LARGE SCALE GENOMIC DNA]</scope>
    <source>
        <strain>SC-B67</strain>
    </source>
</reference>
<protein>
    <recommendedName>
        <fullName evidence="1">UDP-N-acetylenolpyruvoylglucosamine reductase</fullName>
        <ecNumber evidence="1">1.3.1.98</ecNumber>
    </recommendedName>
    <alternativeName>
        <fullName evidence="1">UDP-N-acetylmuramate dehydrogenase</fullName>
    </alternativeName>
</protein>
<accession>Q57H81</accession>
<keyword id="KW-0131">Cell cycle</keyword>
<keyword id="KW-0132">Cell division</keyword>
<keyword id="KW-0133">Cell shape</keyword>
<keyword id="KW-0961">Cell wall biogenesis/degradation</keyword>
<keyword id="KW-0963">Cytoplasm</keyword>
<keyword id="KW-0274">FAD</keyword>
<keyword id="KW-0285">Flavoprotein</keyword>
<keyword id="KW-0521">NADP</keyword>
<keyword id="KW-0560">Oxidoreductase</keyword>
<keyword id="KW-0573">Peptidoglycan synthesis</keyword>
<proteinExistence type="inferred from homology"/>
<comment type="function">
    <text evidence="1">Cell wall formation.</text>
</comment>
<comment type="catalytic activity">
    <reaction evidence="1">
        <text>UDP-N-acetyl-alpha-D-muramate + NADP(+) = UDP-N-acetyl-3-O-(1-carboxyvinyl)-alpha-D-glucosamine + NADPH + H(+)</text>
        <dbReference type="Rhea" id="RHEA:12248"/>
        <dbReference type="ChEBI" id="CHEBI:15378"/>
        <dbReference type="ChEBI" id="CHEBI:57783"/>
        <dbReference type="ChEBI" id="CHEBI:58349"/>
        <dbReference type="ChEBI" id="CHEBI:68483"/>
        <dbReference type="ChEBI" id="CHEBI:70757"/>
        <dbReference type="EC" id="1.3.1.98"/>
    </reaction>
</comment>
<comment type="cofactor">
    <cofactor evidence="1">
        <name>FAD</name>
        <dbReference type="ChEBI" id="CHEBI:57692"/>
    </cofactor>
</comment>
<comment type="pathway">
    <text evidence="1">Cell wall biogenesis; peptidoglycan biosynthesis.</text>
</comment>
<comment type="subcellular location">
    <subcellularLocation>
        <location evidence="1">Cytoplasm</location>
    </subcellularLocation>
</comment>
<comment type="similarity">
    <text evidence="1">Belongs to the MurB family.</text>
</comment>
<sequence>MTHSLKPWNTFGIDHCAKHIACAENEQQILSAWQQATREGLPVMILGEGSNVLFLENYAGTVILNRLKGIEVNETADAWHLHVGAGENWHQLVRYALDNNMPGLENLALIPGCVGSSPIQNIGAYGVELQRVCDYVDCVELETGKRLRLSAAECRFGYRDSIFKNEYQDRVAIVAVGLRLSKQWQPVLTYGDLTRLDPKTVTAQQVFDAVCHMRTTKLPDPKVNGNAGSFFKNPVVAADIAMELLERFPNAPHYPQADGSVKLAAGWLIDQCQLKGVTIGGAAVHRQQALVLINANDATSKDVVALAHHVRQKVGEKFNVWLEPEVRFIGRSGEVNAVESIA</sequence>
<feature type="chain" id="PRO_0000224716" description="UDP-N-acetylenolpyruvoylglucosamine reductase">
    <location>
        <begin position="1"/>
        <end position="342"/>
    </location>
</feature>
<feature type="domain" description="FAD-binding PCMH-type" evidence="1">
    <location>
        <begin position="13"/>
        <end position="183"/>
    </location>
</feature>
<feature type="active site" evidence="1">
    <location>
        <position position="159"/>
    </location>
</feature>
<feature type="active site" description="Proton donor" evidence="1">
    <location>
        <position position="229"/>
    </location>
</feature>
<feature type="active site" evidence="1">
    <location>
        <position position="325"/>
    </location>
</feature>
<evidence type="ECO:0000255" key="1">
    <source>
        <dbReference type="HAMAP-Rule" id="MF_00037"/>
    </source>
</evidence>
<dbReference type="EC" id="1.3.1.98" evidence="1"/>
<dbReference type="EMBL" id="AE017220">
    <property type="protein sequence ID" value="AAX67931.1"/>
    <property type="molecule type" value="Genomic_DNA"/>
</dbReference>
<dbReference type="RefSeq" id="WP_011264442.1">
    <property type="nucleotide sequence ID" value="NC_006905.1"/>
</dbReference>
<dbReference type="SMR" id="Q57H81"/>
<dbReference type="KEGG" id="sec:SCH_4025"/>
<dbReference type="HOGENOM" id="CLU_035304_0_0_6"/>
<dbReference type="UniPathway" id="UPA00219"/>
<dbReference type="Proteomes" id="UP000000538">
    <property type="component" value="Chromosome"/>
</dbReference>
<dbReference type="GO" id="GO:0005829">
    <property type="term" value="C:cytosol"/>
    <property type="evidence" value="ECO:0007669"/>
    <property type="project" value="TreeGrafter"/>
</dbReference>
<dbReference type="GO" id="GO:0071949">
    <property type="term" value="F:FAD binding"/>
    <property type="evidence" value="ECO:0007669"/>
    <property type="project" value="InterPro"/>
</dbReference>
<dbReference type="GO" id="GO:0008762">
    <property type="term" value="F:UDP-N-acetylmuramate dehydrogenase activity"/>
    <property type="evidence" value="ECO:0007669"/>
    <property type="project" value="UniProtKB-UniRule"/>
</dbReference>
<dbReference type="GO" id="GO:0051301">
    <property type="term" value="P:cell division"/>
    <property type="evidence" value="ECO:0007669"/>
    <property type="project" value="UniProtKB-KW"/>
</dbReference>
<dbReference type="GO" id="GO:0071555">
    <property type="term" value="P:cell wall organization"/>
    <property type="evidence" value="ECO:0007669"/>
    <property type="project" value="UniProtKB-KW"/>
</dbReference>
<dbReference type="GO" id="GO:0009252">
    <property type="term" value="P:peptidoglycan biosynthetic process"/>
    <property type="evidence" value="ECO:0007669"/>
    <property type="project" value="UniProtKB-UniRule"/>
</dbReference>
<dbReference type="GO" id="GO:0008360">
    <property type="term" value="P:regulation of cell shape"/>
    <property type="evidence" value="ECO:0007669"/>
    <property type="project" value="UniProtKB-KW"/>
</dbReference>
<dbReference type="FunFam" id="3.30.465.10:FF:000018">
    <property type="entry name" value="UDP-N-acetylenolpyruvoylglucosamine reductase"/>
    <property type="match status" value="1"/>
</dbReference>
<dbReference type="FunFam" id="3.90.78.10:FF:000002">
    <property type="entry name" value="UDP-N-acetylenolpyruvoylglucosamine reductase"/>
    <property type="match status" value="1"/>
</dbReference>
<dbReference type="Gene3D" id="3.30.465.10">
    <property type="match status" value="1"/>
</dbReference>
<dbReference type="Gene3D" id="3.90.78.10">
    <property type="entry name" value="UDP-N-acetylenolpyruvoylglucosamine reductase, C-terminal domain"/>
    <property type="match status" value="1"/>
</dbReference>
<dbReference type="Gene3D" id="3.30.43.10">
    <property type="entry name" value="Uridine Diphospho-n-acetylenolpyruvylglucosamine Reductase, domain 2"/>
    <property type="match status" value="1"/>
</dbReference>
<dbReference type="HAMAP" id="MF_00037">
    <property type="entry name" value="MurB"/>
    <property type="match status" value="1"/>
</dbReference>
<dbReference type="InterPro" id="IPR016166">
    <property type="entry name" value="FAD-bd_PCMH"/>
</dbReference>
<dbReference type="InterPro" id="IPR036318">
    <property type="entry name" value="FAD-bd_PCMH-like_sf"/>
</dbReference>
<dbReference type="InterPro" id="IPR016167">
    <property type="entry name" value="FAD-bd_PCMH_sub1"/>
</dbReference>
<dbReference type="InterPro" id="IPR016169">
    <property type="entry name" value="FAD-bd_PCMH_sub2"/>
</dbReference>
<dbReference type="InterPro" id="IPR003170">
    <property type="entry name" value="MurB"/>
</dbReference>
<dbReference type="InterPro" id="IPR011601">
    <property type="entry name" value="MurB_C"/>
</dbReference>
<dbReference type="InterPro" id="IPR036635">
    <property type="entry name" value="MurB_C_sf"/>
</dbReference>
<dbReference type="InterPro" id="IPR006094">
    <property type="entry name" value="Oxid_FAD_bind_N"/>
</dbReference>
<dbReference type="NCBIfam" id="TIGR00179">
    <property type="entry name" value="murB"/>
    <property type="match status" value="1"/>
</dbReference>
<dbReference type="NCBIfam" id="NF000755">
    <property type="entry name" value="PRK00046.1"/>
    <property type="match status" value="1"/>
</dbReference>
<dbReference type="PANTHER" id="PTHR21071">
    <property type="entry name" value="UDP-N-ACETYLENOLPYRUVOYLGLUCOSAMINE REDUCTASE"/>
    <property type="match status" value="1"/>
</dbReference>
<dbReference type="PANTHER" id="PTHR21071:SF4">
    <property type="entry name" value="UDP-N-ACETYLENOLPYRUVOYLGLUCOSAMINE REDUCTASE"/>
    <property type="match status" value="1"/>
</dbReference>
<dbReference type="Pfam" id="PF01565">
    <property type="entry name" value="FAD_binding_4"/>
    <property type="match status" value="1"/>
</dbReference>
<dbReference type="Pfam" id="PF02873">
    <property type="entry name" value="MurB_C"/>
    <property type="match status" value="1"/>
</dbReference>
<dbReference type="SUPFAM" id="SSF56176">
    <property type="entry name" value="FAD-binding/transporter-associated domain-like"/>
    <property type="match status" value="1"/>
</dbReference>
<dbReference type="SUPFAM" id="SSF56194">
    <property type="entry name" value="Uridine diphospho-N-Acetylenolpyruvylglucosamine reductase, MurB, C-terminal domain"/>
    <property type="match status" value="1"/>
</dbReference>
<dbReference type="PROSITE" id="PS51387">
    <property type="entry name" value="FAD_PCMH"/>
    <property type="match status" value="1"/>
</dbReference>
<organism>
    <name type="scientific">Salmonella choleraesuis (strain SC-B67)</name>
    <dbReference type="NCBI Taxonomy" id="321314"/>
    <lineage>
        <taxon>Bacteria</taxon>
        <taxon>Pseudomonadati</taxon>
        <taxon>Pseudomonadota</taxon>
        <taxon>Gammaproteobacteria</taxon>
        <taxon>Enterobacterales</taxon>
        <taxon>Enterobacteriaceae</taxon>
        <taxon>Salmonella</taxon>
    </lineage>
</organism>
<gene>
    <name evidence="1" type="primary">murB</name>
    <name type="ordered locus">SCH_4025</name>
</gene>